<organism>
    <name type="scientific">Desulforapulum autotrophicum (strain ATCC 43914 / DSM 3382 / VKM B-1955 / HRM2)</name>
    <name type="common">Desulfobacterium autotrophicum</name>
    <dbReference type="NCBI Taxonomy" id="177437"/>
    <lineage>
        <taxon>Bacteria</taxon>
        <taxon>Pseudomonadati</taxon>
        <taxon>Thermodesulfobacteriota</taxon>
        <taxon>Desulfobacteria</taxon>
        <taxon>Desulfobacterales</taxon>
        <taxon>Desulfobacteraceae</taxon>
        <taxon>Desulforapulum</taxon>
    </lineage>
</organism>
<sequence length="333" mass="35243">MIILGIESSCDDTAAAVVSDHNTVLSSVVSSQVDVHHRYGGVVPELASRMHIEAISPVVAQAVDQAGISPDQIEGVAVTRGPGLIGALLVGFSFAKAFAWAKNIPWAGVNHLEGHIYSLLLSDDPPAFPFTALLASGGHTSIFHVVSQDRFELLGQTRDDAAGEAFDKVAKMLGLGYPGGAVVEALAAKGDPCLIPFPRSFLDKDGFDFSFSGLKSAVARYVQLNRENLGEMMPHIAAGFQSAVTDVLAFKLIHAARATGCSRIAIAGGVSANRFLASRMKIEAAKHNMALYLPPPSFCGDNAAMIAARGHRLISQGDLCQLDSDVFSRTRFL</sequence>
<accession>C0Q8X7</accession>
<feature type="chain" id="PRO_1000215296" description="tRNA N6-adenosine threonylcarbamoyltransferase">
    <location>
        <begin position="1"/>
        <end position="333"/>
    </location>
</feature>
<feature type="binding site" evidence="1">
    <location>
        <position position="111"/>
    </location>
    <ligand>
        <name>Fe cation</name>
        <dbReference type="ChEBI" id="CHEBI:24875"/>
    </ligand>
</feature>
<feature type="binding site" evidence="1">
    <location>
        <position position="115"/>
    </location>
    <ligand>
        <name>Fe cation</name>
        <dbReference type="ChEBI" id="CHEBI:24875"/>
    </ligand>
</feature>
<feature type="binding site" evidence="1">
    <location>
        <begin position="134"/>
        <end position="138"/>
    </location>
    <ligand>
        <name>substrate</name>
    </ligand>
</feature>
<feature type="binding site" evidence="1">
    <location>
        <position position="167"/>
    </location>
    <ligand>
        <name>substrate</name>
    </ligand>
</feature>
<feature type="binding site" evidence="1">
    <location>
        <position position="180"/>
    </location>
    <ligand>
        <name>substrate</name>
    </ligand>
</feature>
<feature type="binding site" evidence="1">
    <location>
        <position position="273"/>
    </location>
    <ligand>
        <name>substrate</name>
    </ligand>
</feature>
<feature type="binding site" evidence="1">
    <location>
        <position position="301"/>
    </location>
    <ligand>
        <name>Fe cation</name>
        <dbReference type="ChEBI" id="CHEBI:24875"/>
    </ligand>
</feature>
<name>TSAD_DESAH</name>
<gene>
    <name evidence="1" type="primary">tsaD</name>
    <name type="synonym">gcp</name>
    <name type="ordered locus">HRM2_13580</name>
</gene>
<protein>
    <recommendedName>
        <fullName evidence="1">tRNA N6-adenosine threonylcarbamoyltransferase</fullName>
        <ecNumber evidence="1">2.3.1.234</ecNumber>
    </recommendedName>
    <alternativeName>
        <fullName evidence="1">N6-L-threonylcarbamoyladenine synthase</fullName>
        <shortName evidence="1">t(6)A synthase</shortName>
    </alternativeName>
    <alternativeName>
        <fullName evidence="1">t(6)A37 threonylcarbamoyladenosine biosynthesis protein TsaD</fullName>
    </alternativeName>
    <alternativeName>
        <fullName evidence="1">tRNA threonylcarbamoyladenosine biosynthesis protein TsaD</fullName>
    </alternativeName>
</protein>
<reference key="1">
    <citation type="journal article" date="2009" name="Environ. Microbiol.">
        <title>Genome sequence of Desulfobacterium autotrophicum HRM2, a marine sulfate reducer oxidizing organic carbon completely to carbon dioxide.</title>
        <authorList>
            <person name="Strittmatter A.W."/>
            <person name="Liesegang H."/>
            <person name="Rabus R."/>
            <person name="Decker I."/>
            <person name="Amann J."/>
            <person name="Andres S."/>
            <person name="Henne A."/>
            <person name="Fricke W.F."/>
            <person name="Martinez-Arias R."/>
            <person name="Bartels D."/>
            <person name="Goesmann A."/>
            <person name="Krause L."/>
            <person name="Puehler A."/>
            <person name="Klenk H.P."/>
            <person name="Richter M."/>
            <person name="Schuler M."/>
            <person name="Gloeckner F.O."/>
            <person name="Meyerdierks A."/>
            <person name="Gottschalk G."/>
            <person name="Amann R."/>
        </authorList>
    </citation>
    <scope>NUCLEOTIDE SEQUENCE [LARGE SCALE GENOMIC DNA]</scope>
    <source>
        <strain>ATCC 43914 / DSM 3382 / VKM B-1955 / HRM2</strain>
    </source>
</reference>
<dbReference type="EC" id="2.3.1.234" evidence="1"/>
<dbReference type="EMBL" id="CP001087">
    <property type="protein sequence ID" value="ACN14467.1"/>
    <property type="molecule type" value="Genomic_DNA"/>
</dbReference>
<dbReference type="RefSeq" id="WP_015903254.1">
    <property type="nucleotide sequence ID" value="NC_012108.1"/>
</dbReference>
<dbReference type="SMR" id="C0Q8X7"/>
<dbReference type="STRING" id="177437.HRM2_13580"/>
<dbReference type="KEGG" id="dat:HRM2_13580"/>
<dbReference type="eggNOG" id="COG0533">
    <property type="taxonomic scope" value="Bacteria"/>
</dbReference>
<dbReference type="HOGENOM" id="CLU_023208_0_2_7"/>
<dbReference type="OrthoDB" id="9806197at2"/>
<dbReference type="Proteomes" id="UP000000442">
    <property type="component" value="Chromosome"/>
</dbReference>
<dbReference type="GO" id="GO:0005737">
    <property type="term" value="C:cytoplasm"/>
    <property type="evidence" value="ECO:0007669"/>
    <property type="project" value="UniProtKB-SubCell"/>
</dbReference>
<dbReference type="GO" id="GO:0005506">
    <property type="term" value="F:iron ion binding"/>
    <property type="evidence" value="ECO:0007669"/>
    <property type="project" value="UniProtKB-UniRule"/>
</dbReference>
<dbReference type="GO" id="GO:0061711">
    <property type="term" value="F:N(6)-L-threonylcarbamoyladenine synthase activity"/>
    <property type="evidence" value="ECO:0007669"/>
    <property type="project" value="UniProtKB-EC"/>
</dbReference>
<dbReference type="GO" id="GO:0002949">
    <property type="term" value="P:tRNA threonylcarbamoyladenosine modification"/>
    <property type="evidence" value="ECO:0007669"/>
    <property type="project" value="UniProtKB-UniRule"/>
</dbReference>
<dbReference type="CDD" id="cd24133">
    <property type="entry name" value="ASKHA_NBD_TsaD_bac"/>
    <property type="match status" value="1"/>
</dbReference>
<dbReference type="FunFam" id="3.30.420.40:FF:000040">
    <property type="entry name" value="tRNA N6-adenosine threonylcarbamoyltransferase"/>
    <property type="match status" value="1"/>
</dbReference>
<dbReference type="Gene3D" id="3.30.420.40">
    <property type="match status" value="2"/>
</dbReference>
<dbReference type="HAMAP" id="MF_01445">
    <property type="entry name" value="TsaD"/>
    <property type="match status" value="1"/>
</dbReference>
<dbReference type="InterPro" id="IPR043129">
    <property type="entry name" value="ATPase_NBD"/>
</dbReference>
<dbReference type="InterPro" id="IPR000905">
    <property type="entry name" value="Gcp-like_dom"/>
</dbReference>
<dbReference type="InterPro" id="IPR017861">
    <property type="entry name" value="KAE1/TsaD"/>
</dbReference>
<dbReference type="InterPro" id="IPR022450">
    <property type="entry name" value="TsaD"/>
</dbReference>
<dbReference type="NCBIfam" id="TIGR00329">
    <property type="entry name" value="gcp_kae1"/>
    <property type="match status" value="1"/>
</dbReference>
<dbReference type="NCBIfam" id="TIGR03723">
    <property type="entry name" value="T6A_TsaD_YgjD"/>
    <property type="match status" value="1"/>
</dbReference>
<dbReference type="PANTHER" id="PTHR11735">
    <property type="entry name" value="TRNA N6-ADENOSINE THREONYLCARBAMOYLTRANSFERASE"/>
    <property type="match status" value="1"/>
</dbReference>
<dbReference type="PANTHER" id="PTHR11735:SF6">
    <property type="entry name" value="TRNA N6-ADENOSINE THREONYLCARBAMOYLTRANSFERASE, MITOCHONDRIAL"/>
    <property type="match status" value="1"/>
</dbReference>
<dbReference type="Pfam" id="PF00814">
    <property type="entry name" value="TsaD"/>
    <property type="match status" value="1"/>
</dbReference>
<dbReference type="PRINTS" id="PR00789">
    <property type="entry name" value="OSIALOPTASE"/>
</dbReference>
<dbReference type="SUPFAM" id="SSF53067">
    <property type="entry name" value="Actin-like ATPase domain"/>
    <property type="match status" value="2"/>
</dbReference>
<proteinExistence type="inferred from homology"/>
<keyword id="KW-0012">Acyltransferase</keyword>
<keyword id="KW-0963">Cytoplasm</keyword>
<keyword id="KW-0408">Iron</keyword>
<keyword id="KW-0479">Metal-binding</keyword>
<keyword id="KW-1185">Reference proteome</keyword>
<keyword id="KW-0808">Transferase</keyword>
<keyword id="KW-0819">tRNA processing</keyword>
<comment type="function">
    <text evidence="1">Required for the formation of a threonylcarbamoyl group on adenosine at position 37 (t(6)A37) in tRNAs that read codons beginning with adenine. Is involved in the transfer of the threonylcarbamoyl moiety of threonylcarbamoyl-AMP (TC-AMP) to the N6 group of A37, together with TsaE and TsaB. TsaD likely plays a direct catalytic role in this reaction.</text>
</comment>
<comment type="catalytic activity">
    <reaction evidence="1">
        <text>L-threonylcarbamoyladenylate + adenosine(37) in tRNA = N(6)-L-threonylcarbamoyladenosine(37) in tRNA + AMP + H(+)</text>
        <dbReference type="Rhea" id="RHEA:37059"/>
        <dbReference type="Rhea" id="RHEA-COMP:10162"/>
        <dbReference type="Rhea" id="RHEA-COMP:10163"/>
        <dbReference type="ChEBI" id="CHEBI:15378"/>
        <dbReference type="ChEBI" id="CHEBI:73682"/>
        <dbReference type="ChEBI" id="CHEBI:74411"/>
        <dbReference type="ChEBI" id="CHEBI:74418"/>
        <dbReference type="ChEBI" id="CHEBI:456215"/>
        <dbReference type="EC" id="2.3.1.234"/>
    </reaction>
</comment>
<comment type="cofactor">
    <cofactor evidence="1">
        <name>Fe(2+)</name>
        <dbReference type="ChEBI" id="CHEBI:29033"/>
    </cofactor>
    <text evidence="1">Binds 1 Fe(2+) ion per subunit.</text>
</comment>
<comment type="subcellular location">
    <subcellularLocation>
        <location evidence="1">Cytoplasm</location>
    </subcellularLocation>
</comment>
<comment type="similarity">
    <text evidence="1">Belongs to the KAE1 / TsaD family.</text>
</comment>
<evidence type="ECO:0000255" key="1">
    <source>
        <dbReference type="HAMAP-Rule" id="MF_01445"/>
    </source>
</evidence>